<proteinExistence type="evidence at protein level"/>
<evidence type="ECO:0000255" key="1">
    <source>
        <dbReference type="PROSITE-ProRule" id="PRU00143"/>
    </source>
</evidence>
<evidence type="ECO:0000269" key="2">
    <source>
    </source>
</evidence>
<evidence type="ECO:0000269" key="3">
    <source>
    </source>
</evidence>
<evidence type="ECO:0000305" key="4"/>
<feature type="chain" id="PRO_0000247192" description="PDZ domain-containing protein GIPC3">
    <location>
        <begin position="1"/>
        <end position="297"/>
    </location>
</feature>
<feature type="domain" description="PDZ" evidence="1">
    <location>
        <begin position="97"/>
        <end position="177"/>
    </location>
</feature>
<feature type="sequence variant" description="In ahl5." evidence="3">
    <original>G</original>
    <variation>R</variation>
    <location>
        <position position="115"/>
    </location>
</feature>
<accession>Q8R5M0</accession>
<comment type="function">
    <text evidence="3">Required for postnatal maturation of the hair bundle and long-term survival of hair cells and spiral ganglion.</text>
</comment>
<comment type="tissue specificity">
    <text evidence="2 3">Expressed in adult lung, brain and testis. In the inner ear, it is expressed in the inner and outer hair cells of the organ of Corti. Also expressed in cochlear spiral ganglion neurons.</text>
</comment>
<comment type="disease">
    <text evidence="3">Defects in GIPC3 underlie the age-related hearing loss 5 (ahl5) and juvenile audiogenic monogenic seizure (jams1) phenotypes. Ahl5 mice show irregular structure of the stereocilia bundle of outer and inner hair cells, late-onset degeneration of the organ of Corti. The spiral ganglion exhibits a severe loss of neurons.</text>
</comment>
<comment type="similarity">
    <text evidence="4">Belongs to the GIPC family.</text>
</comment>
<gene>
    <name type="primary">Gipc3</name>
    <name type="synonym">Rgs19ip3</name>
</gene>
<keyword id="KW-0209">Deafness</keyword>
<keyword id="KW-0225">Disease variant</keyword>
<keyword id="KW-1185">Reference proteome</keyword>
<sequence>MDSAAPREPGATEPPARARPRLVFRTQLAHGSPTGRIEGFTNVRELYAKIAEAFGIAPTEILFCTLNSHKVDMQKLLGGQIGLEDFIFAHVRGETKEVEVTKTEDALGLTITDNGAGYAFIKRIKEGSIINRIEAVCVGDSIEAINDHSIVGCRHYEVAKMLRELPKSQPFTLRLVQPRRAFDMIGQRSRSSKCPVEAKVSSGRETLRLRSGGAATVEEAPSDVEAAAARRVDDLLESYMGIRDPELAAAVVETARSSAGAQAFARGLDAVLGEFAFPDEFVVEVWAAIGEAHDACG</sequence>
<dbReference type="EMBL" id="AB074494">
    <property type="protein sequence ID" value="BAB84713.1"/>
    <property type="molecule type" value="mRNA"/>
</dbReference>
<dbReference type="CCDS" id="CCDS24054.1"/>
<dbReference type="RefSeq" id="NP_683753.1">
    <property type="nucleotide sequence ID" value="NM_148951.3"/>
</dbReference>
<dbReference type="SMR" id="Q8R5M0"/>
<dbReference type="FunCoup" id="Q8R5M0">
    <property type="interactions" value="115"/>
</dbReference>
<dbReference type="STRING" id="10090.ENSMUSP00000049236"/>
<dbReference type="PhosphoSitePlus" id="Q8R5M0"/>
<dbReference type="SwissPalm" id="Q8R5M0"/>
<dbReference type="PaxDb" id="10090-ENSMUSP00000049236"/>
<dbReference type="PeptideAtlas" id="Q8R5M0"/>
<dbReference type="ProteomicsDB" id="268824"/>
<dbReference type="Antibodypedia" id="23268">
    <property type="antibodies" value="139 antibodies from 24 providers"/>
</dbReference>
<dbReference type="DNASU" id="209047"/>
<dbReference type="Ensembl" id="ENSMUST00000045102.7">
    <property type="protein sequence ID" value="ENSMUSP00000049236.6"/>
    <property type="gene ID" value="ENSMUSG00000034872.7"/>
</dbReference>
<dbReference type="GeneID" id="209047"/>
<dbReference type="KEGG" id="mmu:209047"/>
<dbReference type="UCSC" id="uc007ghi.1">
    <property type="organism name" value="mouse"/>
</dbReference>
<dbReference type="AGR" id="MGI:2387006"/>
<dbReference type="CTD" id="126326"/>
<dbReference type="MGI" id="MGI:2387006">
    <property type="gene designation" value="Gipc3"/>
</dbReference>
<dbReference type="VEuPathDB" id="HostDB:ENSMUSG00000034872"/>
<dbReference type="eggNOG" id="KOG3938">
    <property type="taxonomic scope" value="Eukaryota"/>
</dbReference>
<dbReference type="GeneTree" id="ENSGT00390000003420"/>
<dbReference type="HOGENOM" id="CLU_044527_3_0_1"/>
<dbReference type="InParanoid" id="Q8R5M0"/>
<dbReference type="OMA" id="EQAPSEF"/>
<dbReference type="OrthoDB" id="6509831at2759"/>
<dbReference type="PhylomeDB" id="Q8R5M0"/>
<dbReference type="TreeFam" id="TF313878"/>
<dbReference type="BioGRID-ORCS" id="209047">
    <property type="hits" value="1 hit in 79 CRISPR screens"/>
</dbReference>
<dbReference type="ChiTaRS" id="Gipc3">
    <property type="organism name" value="mouse"/>
</dbReference>
<dbReference type="PRO" id="PR:Q8R5M0"/>
<dbReference type="Proteomes" id="UP000000589">
    <property type="component" value="Chromosome 10"/>
</dbReference>
<dbReference type="RNAct" id="Q8R5M0">
    <property type="molecule type" value="protein"/>
</dbReference>
<dbReference type="Bgee" id="ENSMUSG00000034872">
    <property type="expression patterns" value="Expressed in mesodermal cell in embryo and 35 other cell types or tissues"/>
</dbReference>
<dbReference type="CDD" id="cd21180">
    <property type="entry name" value="GH2_GIPC"/>
    <property type="match status" value="1"/>
</dbReference>
<dbReference type="CDD" id="cd23079">
    <property type="entry name" value="PDZ_GIPC3"/>
    <property type="match status" value="1"/>
</dbReference>
<dbReference type="FunFam" id="2.30.42.10:FF:000097">
    <property type="entry name" value="PDZ domain-containing protein GIPC1 isoform 1"/>
    <property type="match status" value="1"/>
</dbReference>
<dbReference type="Gene3D" id="2.30.42.10">
    <property type="match status" value="1"/>
</dbReference>
<dbReference type="InterPro" id="IPR055349">
    <property type="entry name" value="GH2_GIPC"/>
</dbReference>
<dbReference type="InterPro" id="IPR056814">
    <property type="entry name" value="GIPC1-3_GH1"/>
</dbReference>
<dbReference type="InterPro" id="IPR017379">
    <property type="entry name" value="GIPC1/2/3"/>
</dbReference>
<dbReference type="InterPro" id="IPR001478">
    <property type="entry name" value="PDZ"/>
</dbReference>
<dbReference type="InterPro" id="IPR036034">
    <property type="entry name" value="PDZ_sf"/>
</dbReference>
<dbReference type="PANTHER" id="PTHR12259:SF2">
    <property type="entry name" value="PDZ DOMAIN-CONTAINING PROTEIN GIPC3"/>
    <property type="match status" value="1"/>
</dbReference>
<dbReference type="PANTHER" id="PTHR12259">
    <property type="entry name" value="RGS-GAIP INTERACTING PROTEIN GIPC"/>
    <property type="match status" value="1"/>
</dbReference>
<dbReference type="Pfam" id="PF25083">
    <property type="entry name" value="GIPC1_GH1"/>
    <property type="match status" value="1"/>
</dbReference>
<dbReference type="Pfam" id="PF25082">
    <property type="entry name" value="GIPC1_GH2"/>
    <property type="match status" value="1"/>
</dbReference>
<dbReference type="Pfam" id="PF00595">
    <property type="entry name" value="PDZ"/>
    <property type="match status" value="1"/>
</dbReference>
<dbReference type="PIRSF" id="PIRSF038083">
    <property type="entry name" value="UCP038083_GIPC"/>
    <property type="match status" value="1"/>
</dbReference>
<dbReference type="SMART" id="SM00228">
    <property type="entry name" value="PDZ"/>
    <property type="match status" value="1"/>
</dbReference>
<dbReference type="SUPFAM" id="SSF50156">
    <property type="entry name" value="PDZ domain-like"/>
    <property type="match status" value="1"/>
</dbReference>
<dbReference type="PROSITE" id="PS50106">
    <property type="entry name" value="PDZ"/>
    <property type="match status" value="1"/>
</dbReference>
<organism>
    <name type="scientific">Mus musculus</name>
    <name type="common">Mouse</name>
    <dbReference type="NCBI Taxonomy" id="10090"/>
    <lineage>
        <taxon>Eukaryota</taxon>
        <taxon>Metazoa</taxon>
        <taxon>Chordata</taxon>
        <taxon>Craniata</taxon>
        <taxon>Vertebrata</taxon>
        <taxon>Euteleostomi</taxon>
        <taxon>Mammalia</taxon>
        <taxon>Eutheria</taxon>
        <taxon>Euarchontoglires</taxon>
        <taxon>Glires</taxon>
        <taxon>Rodentia</taxon>
        <taxon>Myomorpha</taxon>
        <taxon>Muroidea</taxon>
        <taxon>Muridae</taxon>
        <taxon>Murinae</taxon>
        <taxon>Mus</taxon>
        <taxon>Mus</taxon>
    </lineage>
</organism>
<name>GIPC3_MOUSE</name>
<reference key="1">
    <citation type="journal article" date="2002" name="Int. J. Mol. Med.">
        <title>Molecular cloning and characterization of mouse Gipc3.</title>
        <authorList>
            <person name="Saitoh T."/>
            <person name="Mine T."/>
            <person name="Katoh M."/>
        </authorList>
    </citation>
    <scope>NUCLEOTIDE SEQUENCE [MRNA]</scope>
    <scope>TISSUE SPECIFICITY</scope>
    <source>
        <tissue>Kidney</tissue>
    </source>
</reference>
<reference key="2">
    <citation type="journal article" date="2010" name="Cell">
        <title>A tissue-specific atlas of mouse protein phosphorylation and expression.</title>
        <authorList>
            <person name="Huttlin E.L."/>
            <person name="Jedrychowski M.P."/>
            <person name="Elias J.E."/>
            <person name="Goswami T."/>
            <person name="Rad R."/>
            <person name="Beausoleil S.A."/>
            <person name="Villen J."/>
            <person name="Haas W."/>
            <person name="Sowa M.E."/>
            <person name="Gygi S.P."/>
        </authorList>
    </citation>
    <scope>IDENTIFICATION BY MASS SPECTROMETRY [LARGE SCALE ANALYSIS]</scope>
    <source>
        <tissue>Lung</tissue>
        <tissue>Testis</tissue>
    </source>
</reference>
<reference key="3">
    <citation type="journal article" date="2011" name="Nat. Commun.">
        <title>Gipc3 mutations associated with audiogenic seizures and sensorineural hearing loss in mouse and human.</title>
        <authorList>
            <person name="Charizopoulou N."/>
            <person name="Lelli A."/>
            <person name="Schraders M."/>
            <person name="Ray K."/>
            <person name="Hildebrand M.S."/>
            <person name="Ramesh A."/>
            <person name="Srisailapathy C.R."/>
            <person name="Oostrik J."/>
            <person name="Admiraal R.J."/>
            <person name="Neely H.R."/>
            <person name="Latoche J.R."/>
            <person name="Smith R.J."/>
            <person name="Northup J.K."/>
            <person name="Kremer H."/>
            <person name="Holt J.R."/>
            <person name="Noben-Trauth K."/>
        </authorList>
    </citation>
    <scope>FUNCTION</scope>
    <scope>TISSUE SPECIFICITY</scope>
    <scope>DISEASE</scope>
    <scope>VARIANT AHL5 ARG-115</scope>
</reference>
<protein>
    <recommendedName>
        <fullName>PDZ domain-containing protein GIPC3</fullName>
    </recommendedName>
    <alternativeName>
        <fullName>Regulator of G-protein signaling 19-interacting protein 3</fullName>
    </alternativeName>
</protein>